<reference key="1">
    <citation type="journal article" date="2011" name="J. Bacteriol.">
        <title>Comparative genomics of 28 Salmonella enterica isolates: evidence for CRISPR-mediated adaptive sublineage evolution.</title>
        <authorList>
            <person name="Fricke W.F."/>
            <person name="Mammel M.K."/>
            <person name="McDermott P.F."/>
            <person name="Tartera C."/>
            <person name="White D.G."/>
            <person name="Leclerc J.E."/>
            <person name="Ravel J."/>
            <person name="Cebula T.A."/>
        </authorList>
    </citation>
    <scope>NUCLEOTIDE SEQUENCE [LARGE SCALE GENOMIC DNA]</scope>
    <source>
        <strain>SL476</strain>
    </source>
</reference>
<sequence length="293" mass="32000">MPWIQLKLNTTGANAEELSDALMEAGAVSITFQDTHDTPVFEPLPGETRLWGDTDVIGLFDAETDMKDVVAILEQHPLLGAGFTHKIEQLEDKDWEREWMDNFHPMRFGERLWICPSWRDIPDENAVNVMLDPGLAFGTGTHPTTSLCLQWLDGLDLNGKTVIDFGCGSGILAIAALKLGAAKAIGIDIDPQAIQASRDNAERNGVSDRLELYLPKDQPEAMKADVVVANILAGPLRELAPLISVLPVEGGLLGLSGILASQAESVCDAYAELFTLDPVVEKEEWCRITGRKK</sequence>
<comment type="function">
    <text evidence="1">Methylates ribosomal protein L11.</text>
</comment>
<comment type="catalytic activity">
    <reaction evidence="1">
        <text>L-lysyl-[protein] + 3 S-adenosyl-L-methionine = N(6),N(6),N(6)-trimethyl-L-lysyl-[protein] + 3 S-adenosyl-L-homocysteine + 3 H(+)</text>
        <dbReference type="Rhea" id="RHEA:54192"/>
        <dbReference type="Rhea" id="RHEA-COMP:9752"/>
        <dbReference type="Rhea" id="RHEA-COMP:13826"/>
        <dbReference type="ChEBI" id="CHEBI:15378"/>
        <dbReference type="ChEBI" id="CHEBI:29969"/>
        <dbReference type="ChEBI" id="CHEBI:57856"/>
        <dbReference type="ChEBI" id="CHEBI:59789"/>
        <dbReference type="ChEBI" id="CHEBI:61961"/>
    </reaction>
</comment>
<comment type="subcellular location">
    <subcellularLocation>
        <location evidence="1">Cytoplasm</location>
    </subcellularLocation>
</comment>
<comment type="similarity">
    <text evidence="1">Belongs to the methyltransferase superfamily. PrmA family.</text>
</comment>
<accession>B4TJV7</accession>
<name>PRMA_SALHS</name>
<proteinExistence type="inferred from homology"/>
<evidence type="ECO:0000255" key="1">
    <source>
        <dbReference type="HAMAP-Rule" id="MF_00735"/>
    </source>
</evidence>
<dbReference type="EC" id="2.1.1.-" evidence="1"/>
<dbReference type="EMBL" id="CP001120">
    <property type="protein sequence ID" value="ACF69661.1"/>
    <property type="molecule type" value="Genomic_DNA"/>
</dbReference>
<dbReference type="RefSeq" id="WP_001145851.1">
    <property type="nucleotide sequence ID" value="NC_011083.1"/>
</dbReference>
<dbReference type="SMR" id="B4TJV7"/>
<dbReference type="KEGG" id="seh:SeHA_C3681"/>
<dbReference type="HOGENOM" id="CLU_049382_4_1_6"/>
<dbReference type="Proteomes" id="UP000001866">
    <property type="component" value="Chromosome"/>
</dbReference>
<dbReference type="GO" id="GO:0005829">
    <property type="term" value="C:cytosol"/>
    <property type="evidence" value="ECO:0007669"/>
    <property type="project" value="TreeGrafter"/>
</dbReference>
<dbReference type="GO" id="GO:0016279">
    <property type="term" value="F:protein-lysine N-methyltransferase activity"/>
    <property type="evidence" value="ECO:0007669"/>
    <property type="project" value="TreeGrafter"/>
</dbReference>
<dbReference type="GO" id="GO:0032259">
    <property type="term" value="P:methylation"/>
    <property type="evidence" value="ECO:0007669"/>
    <property type="project" value="UniProtKB-KW"/>
</dbReference>
<dbReference type="CDD" id="cd02440">
    <property type="entry name" value="AdoMet_MTases"/>
    <property type="match status" value="1"/>
</dbReference>
<dbReference type="FunFam" id="3.40.50.150:FF:000021">
    <property type="entry name" value="Ribosomal protein L11 methyltransferase"/>
    <property type="match status" value="1"/>
</dbReference>
<dbReference type="Gene3D" id="3.40.50.150">
    <property type="entry name" value="Vaccinia Virus protein VP39"/>
    <property type="match status" value="1"/>
</dbReference>
<dbReference type="HAMAP" id="MF_00735">
    <property type="entry name" value="Methyltr_PrmA"/>
    <property type="match status" value="1"/>
</dbReference>
<dbReference type="InterPro" id="IPR050078">
    <property type="entry name" value="Ribosomal_L11_MeTrfase_PrmA"/>
</dbReference>
<dbReference type="InterPro" id="IPR004498">
    <property type="entry name" value="Ribosomal_PrmA_MeTrfase"/>
</dbReference>
<dbReference type="InterPro" id="IPR029063">
    <property type="entry name" value="SAM-dependent_MTases_sf"/>
</dbReference>
<dbReference type="NCBIfam" id="TIGR00406">
    <property type="entry name" value="prmA"/>
    <property type="match status" value="1"/>
</dbReference>
<dbReference type="PANTHER" id="PTHR43648">
    <property type="entry name" value="ELECTRON TRANSFER FLAVOPROTEIN BETA SUBUNIT LYSINE METHYLTRANSFERASE"/>
    <property type="match status" value="1"/>
</dbReference>
<dbReference type="PANTHER" id="PTHR43648:SF1">
    <property type="entry name" value="ELECTRON TRANSFER FLAVOPROTEIN BETA SUBUNIT LYSINE METHYLTRANSFERASE"/>
    <property type="match status" value="1"/>
</dbReference>
<dbReference type="Pfam" id="PF06325">
    <property type="entry name" value="PrmA"/>
    <property type="match status" value="1"/>
</dbReference>
<dbReference type="PIRSF" id="PIRSF000401">
    <property type="entry name" value="RPL11_MTase"/>
    <property type="match status" value="1"/>
</dbReference>
<dbReference type="SUPFAM" id="SSF53335">
    <property type="entry name" value="S-adenosyl-L-methionine-dependent methyltransferases"/>
    <property type="match status" value="1"/>
</dbReference>
<feature type="chain" id="PRO_1000132822" description="Ribosomal protein L11 methyltransferase">
    <location>
        <begin position="1"/>
        <end position="293"/>
    </location>
</feature>
<feature type="binding site" evidence="1">
    <location>
        <position position="145"/>
    </location>
    <ligand>
        <name>S-adenosyl-L-methionine</name>
        <dbReference type="ChEBI" id="CHEBI:59789"/>
    </ligand>
</feature>
<feature type="binding site" evidence="1">
    <location>
        <position position="166"/>
    </location>
    <ligand>
        <name>S-adenosyl-L-methionine</name>
        <dbReference type="ChEBI" id="CHEBI:59789"/>
    </ligand>
</feature>
<feature type="binding site" evidence="1">
    <location>
        <position position="188"/>
    </location>
    <ligand>
        <name>S-adenosyl-L-methionine</name>
        <dbReference type="ChEBI" id="CHEBI:59789"/>
    </ligand>
</feature>
<feature type="binding site" evidence="1">
    <location>
        <position position="230"/>
    </location>
    <ligand>
        <name>S-adenosyl-L-methionine</name>
        <dbReference type="ChEBI" id="CHEBI:59789"/>
    </ligand>
</feature>
<gene>
    <name evidence="1" type="primary">prmA</name>
    <name type="ordered locus">SeHA_C3681</name>
</gene>
<protein>
    <recommendedName>
        <fullName evidence="1">Ribosomal protein L11 methyltransferase</fullName>
        <shortName evidence="1">L11 Mtase</shortName>
        <ecNumber evidence="1">2.1.1.-</ecNumber>
    </recommendedName>
</protein>
<organism>
    <name type="scientific">Salmonella heidelberg (strain SL476)</name>
    <dbReference type="NCBI Taxonomy" id="454169"/>
    <lineage>
        <taxon>Bacteria</taxon>
        <taxon>Pseudomonadati</taxon>
        <taxon>Pseudomonadota</taxon>
        <taxon>Gammaproteobacteria</taxon>
        <taxon>Enterobacterales</taxon>
        <taxon>Enterobacteriaceae</taxon>
        <taxon>Salmonella</taxon>
    </lineage>
</organism>
<keyword id="KW-0963">Cytoplasm</keyword>
<keyword id="KW-0489">Methyltransferase</keyword>
<keyword id="KW-0949">S-adenosyl-L-methionine</keyword>
<keyword id="KW-0808">Transferase</keyword>